<reference key="1">
    <citation type="journal article" date="1998" name="Genes Dev.">
        <title>The guanosine nucleotide (p)ppGpp initiates development and A-factor production in Myxococcus xanthus.</title>
        <authorList>
            <person name="Harris B.Z."/>
            <person name="Kaiser D."/>
            <person name="Singer M.H."/>
        </authorList>
    </citation>
    <scope>NUCLEOTIDE SEQUENCE [GENOMIC DNA]</scope>
    <source>
        <strain>DK101</strain>
    </source>
</reference>
<comment type="function">
    <text evidence="1">In eubacteria ppGpp (guanosine 3'-diphosphate 5'-diphosphate) is a mediator of the stringent response that coordinates a variety of cellular activities in response to changes in nutritional abundance. This enzyme catalyzes the formation of pppGpp which is then hydrolyzed to form ppGpp (By similarity).</text>
</comment>
<comment type="catalytic activity">
    <reaction>
        <text>GTP + ATP = guanosine 3'-diphosphate 5'-triphosphate + AMP</text>
        <dbReference type="Rhea" id="RHEA:22088"/>
        <dbReference type="ChEBI" id="CHEBI:30616"/>
        <dbReference type="ChEBI" id="CHEBI:37565"/>
        <dbReference type="ChEBI" id="CHEBI:142410"/>
        <dbReference type="ChEBI" id="CHEBI:456215"/>
        <dbReference type="EC" id="2.7.6.5"/>
    </reaction>
</comment>
<comment type="pathway">
    <text>Purine metabolism; ppGpp biosynthesis; ppGpp from GTP: step 1/2.</text>
</comment>
<comment type="similarity">
    <text evidence="6">Belongs to the RelA/SpoT family.</text>
</comment>
<protein>
    <recommendedName>
        <fullName>GTP pyrophosphokinase</fullName>
        <ecNumber>2.7.6.5</ecNumber>
    </recommendedName>
    <alternativeName>
        <fullName>(p)ppGpp synthase</fullName>
    </alternativeName>
    <alternativeName>
        <fullName>ATP:GTP 3'-pyrophosphotransferase</fullName>
    </alternativeName>
    <alternativeName>
        <fullName>ppGpp synthase I</fullName>
    </alternativeName>
</protein>
<accession>O52177</accession>
<evidence type="ECO:0000250" key="1"/>
<evidence type="ECO:0000255" key="2">
    <source>
        <dbReference type="PROSITE-ProRule" id="PRU01007"/>
    </source>
</evidence>
<evidence type="ECO:0000255" key="3">
    <source>
        <dbReference type="PROSITE-ProRule" id="PRU01175"/>
    </source>
</evidence>
<evidence type="ECO:0000255" key="4">
    <source>
        <dbReference type="PROSITE-ProRule" id="PRU01228"/>
    </source>
</evidence>
<evidence type="ECO:0000256" key="5">
    <source>
        <dbReference type="SAM" id="MobiDB-lite"/>
    </source>
</evidence>
<evidence type="ECO:0000305" key="6"/>
<gene>
    <name type="primary">relA</name>
</gene>
<keyword id="KW-0067">ATP-binding</keyword>
<keyword id="KW-0342">GTP-binding</keyword>
<keyword id="KW-0418">Kinase</keyword>
<keyword id="KW-0547">Nucleotide-binding</keyword>
<keyword id="KW-0808">Transferase</keyword>
<organism>
    <name type="scientific">Myxococcus xanthus</name>
    <dbReference type="NCBI Taxonomy" id="34"/>
    <lineage>
        <taxon>Bacteria</taxon>
        <taxon>Pseudomonadati</taxon>
        <taxon>Myxococcota</taxon>
        <taxon>Myxococcia</taxon>
        <taxon>Myxococcales</taxon>
        <taxon>Cystobacterineae</taxon>
        <taxon>Myxococcaceae</taxon>
        <taxon>Myxococcus</taxon>
    </lineage>
</organism>
<dbReference type="EC" id="2.7.6.5"/>
<dbReference type="EMBL" id="AF025847">
    <property type="protein sequence ID" value="AAB97677.1"/>
    <property type="molecule type" value="Genomic_DNA"/>
</dbReference>
<dbReference type="SMR" id="O52177"/>
<dbReference type="UniPathway" id="UPA00908">
    <property type="reaction ID" value="UER00884"/>
</dbReference>
<dbReference type="GO" id="GO:0005886">
    <property type="term" value="C:plasma membrane"/>
    <property type="evidence" value="ECO:0007669"/>
    <property type="project" value="TreeGrafter"/>
</dbReference>
<dbReference type="GO" id="GO:0005524">
    <property type="term" value="F:ATP binding"/>
    <property type="evidence" value="ECO:0007669"/>
    <property type="project" value="UniProtKB-KW"/>
</dbReference>
<dbReference type="GO" id="GO:0005525">
    <property type="term" value="F:GTP binding"/>
    <property type="evidence" value="ECO:0007669"/>
    <property type="project" value="UniProtKB-KW"/>
</dbReference>
<dbReference type="GO" id="GO:0008728">
    <property type="term" value="F:GTP diphosphokinase activity"/>
    <property type="evidence" value="ECO:0007669"/>
    <property type="project" value="UniProtKB-EC"/>
</dbReference>
<dbReference type="GO" id="GO:0008893">
    <property type="term" value="F:guanosine-3',5'-bis(diphosphate) 3'-diphosphatase activity"/>
    <property type="evidence" value="ECO:0007669"/>
    <property type="project" value="TreeGrafter"/>
</dbReference>
<dbReference type="GO" id="GO:0016301">
    <property type="term" value="F:kinase activity"/>
    <property type="evidence" value="ECO:0007669"/>
    <property type="project" value="UniProtKB-KW"/>
</dbReference>
<dbReference type="GO" id="GO:0015970">
    <property type="term" value="P:guanosine tetraphosphate biosynthetic process"/>
    <property type="evidence" value="ECO:0007669"/>
    <property type="project" value="UniProtKB-UniPathway"/>
</dbReference>
<dbReference type="GO" id="GO:0042594">
    <property type="term" value="P:response to starvation"/>
    <property type="evidence" value="ECO:0007669"/>
    <property type="project" value="TreeGrafter"/>
</dbReference>
<dbReference type="CDD" id="cd04876">
    <property type="entry name" value="ACT_RelA-SpoT"/>
    <property type="match status" value="1"/>
</dbReference>
<dbReference type="CDD" id="cd00077">
    <property type="entry name" value="HDc"/>
    <property type="match status" value="1"/>
</dbReference>
<dbReference type="CDD" id="cd05399">
    <property type="entry name" value="NT_Rel-Spo_like"/>
    <property type="match status" value="1"/>
</dbReference>
<dbReference type="CDD" id="cd01668">
    <property type="entry name" value="TGS_RSH"/>
    <property type="match status" value="1"/>
</dbReference>
<dbReference type="FunFam" id="3.10.20.30:FF:000002">
    <property type="entry name" value="GTP pyrophosphokinase (RelA/SpoT)"/>
    <property type="match status" value="1"/>
</dbReference>
<dbReference type="FunFam" id="1.10.3210.10:FF:000001">
    <property type="entry name" value="GTP pyrophosphokinase RelA"/>
    <property type="match status" value="1"/>
</dbReference>
<dbReference type="FunFam" id="3.30.460.10:FF:000001">
    <property type="entry name" value="GTP pyrophosphokinase RelA"/>
    <property type="match status" value="1"/>
</dbReference>
<dbReference type="Gene3D" id="3.10.20.30">
    <property type="match status" value="1"/>
</dbReference>
<dbReference type="Gene3D" id="3.30.70.260">
    <property type="match status" value="1"/>
</dbReference>
<dbReference type="Gene3D" id="3.30.460.10">
    <property type="entry name" value="Beta Polymerase, domain 2"/>
    <property type="match status" value="1"/>
</dbReference>
<dbReference type="Gene3D" id="1.10.3210.10">
    <property type="entry name" value="Hypothetical protein af1432"/>
    <property type="match status" value="1"/>
</dbReference>
<dbReference type="InterPro" id="IPR045865">
    <property type="entry name" value="ACT-like_dom_sf"/>
</dbReference>
<dbReference type="InterPro" id="IPR002912">
    <property type="entry name" value="ACT_dom"/>
</dbReference>
<dbReference type="InterPro" id="IPR012675">
    <property type="entry name" value="Beta-grasp_dom_sf"/>
</dbReference>
<dbReference type="InterPro" id="IPR003607">
    <property type="entry name" value="HD/PDEase_dom"/>
</dbReference>
<dbReference type="InterPro" id="IPR006674">
    <property type="entry name" value="HD_domain"/>
</dbReference>
<dbReference type="InterPro" id="IPR043519">
    <property type="entry name" value="NT_sf"/>
</dbReference>
<dbReference type="InterPro" id="IPR004811">
    <property type="entry name" value="RelA/Spo_fam"/>
</dbReference>
<dbReference type="InterPro" id="IPR045600">
    <property type="entry name" value="RelA/SpoT_AH_RIS"/>
</dbReference>
<dbReference type="InterPro" id="IPR007685">
    <property type="entry name" value="RelA_SpoT"/>
</dbReference>
<dbReference type="InterPro" id="IPR004095">
    <property type="entry name" value="TGS"/>
</dbReference>
<dbReference type="InterPro" id="IPR012676">
    <property type="entry name" value="TGS-like"/>
</dbReference>
<dbReference type="InterPro" id="IPR033655">
    <property type="entry name" value="TGS_RelA/SpoT"/>
</dbReference>
<dbReference type="NCBIfam" id="TIGR00691">
    <property type="entry name" value="spoT_relA"/>
    <property type="match status" value="1"/>
</dbReference>
<dbReference type="PANTHER" id="PTHR21262:SF36">
    <property type="entry name" value="BIFUNCTIONAL (P)PPGPP SYNTHASE_HYDROLASE SPOT"/>
    <property type="match status" value="1"/>
</dbReference>
<dbReference type="PANTHER" id="PTHR21262">
    <property type="entry name" value="GUANOSINE-3',5'-BIS DIPHOSPHATE 3'-PYROPHOSPHOHYDROLASE"/>
    <property type="match status" value="1"/>
</dbReference>
<dbReference type="Pfam" id="PF13291">
    <property type="entry name" value="ACT_4"/>
    <property type="match status" value="1"/>
</dbReference>
<dbReference type="Pfam" id="PF13328">
    <property type="entry name" value="HD_4"/>
    <property type="match status" value="1"/>
</dbReference>
<dbReference type="Pfam" id="PF19296">
    <property type="entry name" value="RelA_AH_RIS"/>
    <property type="match status" value="1"/>
</dbReference>
<dbReference type="Pfam" id="PF04607">
    <property type="entry name" value="RelA_SpoT"/>
    <property type="match status" value="1"/>
</dbReference>
<dbReference type="Pfam" id="PF02824">
    <property type="entry name" value="TGS"/>
    <property type="match status" value="1"/>
</dbReference>
<dbReference type="SMART" id="SM00471">
    <property type="entry name" value="HDc"/>
    <property type="match status" value="1"/>
</dbReference>
<dbReference type="SMART" id="SM00954">
    <property type="entry name" value="RelA_SpoT"/>
    <property type="match status" value="1"/>
</dbReference>
<dbReference type="SUPFAM" id="SSF55021">
    <property type="entry name" value="ACT-like"/>
    <property type="match status" value="1"/>
</dbReference>
<dbReference type="SUPFAM" id="SSF109604">
    <property type="entry name" value="HD-domain/PDEase-like"/>
    <property type="match status" value="1"/>
</dbReference>
<dbReference type="SUPFAM" id="SSF81301">
    <property type="entry name" value="Nucleotidyltransferase"/>
    <property type="match status" value="1"/>
</dbReference>
<dbReference type="SUPFAM" id="SSF81271">
    <property type="entry name" value="TGS-like"/>
    <property type="match status" value="1"/>
</dbReference>
<dbReference type="PROSITE" id="PS51671">
    <property type="entry name" value="ACT"/>
    <property type="match status" value="1"/>
</dbReference>
<dbReference type="PROSITE" id="PS51831">
    <property type="entry name" value="HD"/>
    <property type="match status" value="1"/>
</dbReference>
<dbReference type="PROSITE" id="PS51880">
    <property type="entry name" value="TGS"/>
    <property type="match status" value="1"/>
</dbReference>
<sequence length="757" mass="84978">MWGNVAPPLVQSYDCSSFDDSPERHPPTVSQYHPDPDLDIIKKAYVYSAKVHQGQLRKSGEPYLVHPLEVAGILGELKLDEASIVTGLLHDTIEDTLATEEELTELFGSEVAHLVDGVTKLSKFSASASLSQEEKQAENFRKMIIAMAQDIRVILVKLADRTHNMRTLDHMSEEKQARIAQETLDIYAPLANRLGISWIKTELEDLSFRYVKPQEFFALQAKLNKRKKEREKYIEDTCDLIRSKLAERGLKGEVSGRFKHVYSIYKKIKSQGIDFDQIHDIIAFRIIAPTAPSCYEALGLVHEMWKPVPGRFKDFIAIPKPNMYQSLHTTIIGPLSERVEVQIRTSEMHKIAEEGIAAHWKYKEGKAVISKDDEKFAWLRQLMEWQQDLKDPKEFLETVKVDLFTDEVFVFTPKGDVRSLPRGATPVDFAYAIHSDVGNRCVGAKVNGKIVPLRYKMKNGDTVEVLTSPQQHPSKDWLTFVKTSRAQQRIRGFIKQQQREKSLQLGRELADRELKRFQLNFNRLLKSGEMKKAAVDLGFRVEDDMLVAIGYGKVTPQQLSHRLVPQEKLNAAEAGGRADANPAATTSGGAGNSVLPGLSRVTDLAKRLVGRSNRSGVQIGGVDDVLVRFGRCCNPVPGDPIAGFITRGRGVTVHTVGCEKALATDPERRVDVSWDVRGDFKRPVTLRVLTADRPGLLADITNTFSKKGVNISQANCRATGDDRAVNTFEVIISDLKQLTDLMRTIERLQGVYSVERI</sequence>
<proteinExistence type="inferred from homology"/>
<feature type="chain" id="PRO_0000166553" description="GTP pyrophosphokinase">
    <location>
        <begin position="1"/>
        <end position="757"/>
    </location>
</feature>
<feature type="domain" description="HD" evidence="3">
    <location>
        <begin position="63"/>
        <end position="165"/>
    </location>
</feature>
<feature type="domain" description="TGS" evidence="4">
    <location>
        <begin position="406"/>
        <end position="467"/>
    </location>
</feature>
<feature type="domain" description="ACT" evidence="2">
    <location>
        <begin position="685"/>
        <end position="757"/>
    </location>
</feature>
<feature type="region of interest" description="Disordered" evidence="5">
    <location>
        <begin position="13"/>
        <end position="33"/>
    </location>
</feature>
<feature type="region of interest" description="Disordered" evidence="5">
    <location>
        <begin position="571"/>
        <end position="592"/>
    </location>
</feature>
<name>RELA_MYXXA</name>